<keyword id="KW-0963">Cytoplasm</keyword>
<keyword id="KW-0570">Pentose shunt</keyword>
<keyword id="KW-1185">Reference proteome</keyword>
<keyword id="KW-0704">Schiff base</keyword>
<keyword id="KW-0808">Transferase</keyword>
<feature type="chain" id="PRO_1000206465" description="Transaldolase">
    <location>
        <begin position="1"/>
        <end position="310"/>
    </location>
</feature>
<feature type="active site" description="Schiff-base intermediate with substrate" evidence="2">
    <location>
        <position position="124"/>
    </location>
</feature>
<protein>
    <recommendedName>
        <fullName evidence="2">Transaldolase</fullName>
        <ecNumber evidence="2">2.2.1.2</ecNumber>
    </recommendedName>
</protein>
<reference key="1">
    <citation type="journal article" date="2009" name="PLoS ONE">
        <title>The complete genome of Teredinibacter turnerae T7901: an intracellular endosymbiont of marine wood-boring bivalves (shipworms).</title>
        <authorList>
            <person name="Yang J.C."/>
            <person name="Madupu R."/>
            <person name="Durkin A.S."/>
            <person name="Ekborg N.A."/>
            <person name="Pedamallu C.S."/>
            <person name="Hostetler J.B."/>
            <person name="Radune D."/>
            <person name="Toms B.S."/>
            <person name="Henrissat B."/>
            <person name="Coutinho P.M."/>
            <person name="Schwarz S."/>
            <person name="Field L."/>
            <person name="Trindade-Silva A.E."/>
            <person name="Soares C.A.G."/>
            <person name="Elshahawi S."/>
            <person name="Hanora A."/>
            <person name="Schmidt E.W."/>
            <person name="Haygood M.G."/>
            <person name="Posfai J."/>
            <person name="Benner J."/>
            <person name="Madinger C."/>
            <person name="Nove J."/>
            <person name="Anton B."/>
            <person name="Chaudhary K."/>
            <person name="Foster J."/>
            <person name="Holman A."/>
            <person name="Kumar S."/>
            <person name="Lessard P.A."/>
            <person name="Luyten Y.A."/>
            <person name="Slatko B."/>
            <person name="Wood N."/>
            <person name="Wu B."/>
            <person name="Teplitski M."/>
            <person name="Mougous J.D."/>
            <person name="Ward N."/>
            <person name="Eisen J.A."/>
            <person name="Badger J.H."/>
            <person name="Distel D.L."/>
        </authorList>
    </citation>
    <scope>NUCLEOTIDE SEQUENCE [LARGE SCALE GENOMIC DNA]</scope>
    <source>
        <strain>ATCC 39867 / T7901</strain>
    </source>
</reference>
<name>TAL_TERTT</name>
<accession>C5BLR8</accession>
<dbReference type="EC" id="2.2.1.2" evidence="2"/>
<dbReference type="EMBL" id="CP001614">
    <property type="protein sequence ID" value="ACR13196.1"/>
    <property type="molecule type" value="Genomic_DNA"/>
</dbReference>
<dbReference type="RefSeq" id="WP_015819309.1">
    <property type="nucleotide sequence ID" value="NC_012997.1"/>
</dbReference>
<dbReference type="SMR" id="C5BLR8"/>
<dbReference type="STRING" id="377629.TERTU_2586"/>
<dbReference type="GeneID" id="58410071"/>
<dbReference type="KEGG" id="ttu:TERTU_2586"/>
<dbReference type="eggNOG" id="COG0176">
    <property type="taxonomic scope" value="Bacteria"/>
</dbReference>
<dbReference type="HOGENOM" id="CLU_047470_0_1_6"/>
<dbReference type="OrthoDB" id="9809101at2"/>
<dbReference type="UniPathway" id="UPA00115">
    <property type="reaction ID" value="UER00414"/>
</dbReference>
<dbReference type="Proteomes" id="UP000009080">
    <property type="component" value="Chromosome"/>
</dbReference>
<dbReference type="GO" id="GO:0005829">
    <property type="term" value="C:cytosol"/>
    <property type="evidence" value="ECO:0007669"/>
    <property type="project" value="TreeGrafter"/>
</dbReference>
<dbReference type="GO" id="GO:0004801">
    <property type="term" value="F:transaldolase activity"/>
    <property type="evidence" value="ECO:0000250"/>
    <property type="project" value="UniProtKB"/>
</dbReference>
<dbReference type="GO" id="GO:0005975">
    <property type="term" value="P:carbohydrate metabolic process"/>
    <property type="evidence" value="ECO:0007669"/>
    <property type="project" value="InterPro"/>
</dbReference>
<dbReference type="GO" id="GO:0006098">
    <property type="term" value="P:pentose-phosphate shunt"/>
    <property type="evidence" value="ECO:0007669"/>
    <property type="project" value="UniProtKB-UniRule"/>
</dbReference>
<dbReference type="CDD" id="cd00957">
    <property type="entry name" value="Transaldolase_TalAB"/>
    <property type="match status" value="1"/>
</dbReference>
<dbReference type="FunFam" id="3.20.20.70:FF:000002">
    <property type="entry name" value="Transaldolase"/>
    <property type="match status" value="1"/>
</dbReference>
<dbReference type="Gene3D" id="3.20.20.70">
    <property type="entry name" value="Aldolase class I"/>
    <property type="match status" value="1"/>
</dbReference>
<dbReference type="HAMAP" id="MF_00492">
    <property type="entry name" value="Transaldolase_1"/>
    <property type="match status" value="1"/>
</dbReference>
<dbReference type="InterPro" id="IPR013785">
    <property type="entry name" value="Aldolase_TIM"/>
</dbReference>
<dbReference type="InterPro" id="IPR001585">
    <property type="entry name" value="TAL/FSA"/>
</dbReference>
<dbReference type="InterPro" id="IPR004730">
    <property type="entry name" value="Transaldolase_1"/>
</dbReference>
<dbReference type="InterPro" id="IPR018225">
    <property type="entry name" value="Transaldolase_AS"/>
</dbReference>
<dbReference type="NCBIfam" id="NF009001">
    <property type="entry name" value="PRK12346.1"/>
    <property type="match status" value="1"/>
</dbReference>
<dbReference type="NCBIfam" id="TIGR00874">
    <property type="entry name" value="talAB"/>
    <property type="match status" value="1"/>
</dbReference>
<dbReference type="PANTHER" id="PTHR10683">
    <property type="entry name" value="TRANSALDOLASE"/>
    <property type="match status" value="1"/>
</dbReference>
<dbReference type="PANTHER" id="PTHR10683:SF18">
    <property type="entry name" value="TRANSALDOLASE"/>
    <property type="match status" value="1"/>
</dbReference>
<dbReference type="Pfam" id="PF00923">
    <property type="entry name" value="TAL_FSA"/>
    <property type="match status" value="1"/>
</dbReference>
<dbReference type="SUPFAM" id="SSF51569">
    <property type="entry name" value="Aldolase"/>
    <property type="match status" value="1"/>
</dbReference>
<dbReference type="PROSITE" id="PS01054">
    <property type="entry name" value="TRANSALDOLASE_1"/>
    <property type="match status" value="1"/>
</dbReference>
<dbReference type="PROSITE" id="PS00958">
    <property type="entry name" value="TRANSALDOLASE_2"/>
    <property type="match status" value="1"/>
</dbReference>
<gene>
    <name evidence="2" type="primary">tal</name>
    <name type="ordered locus">TERTU_2586</name>
</gene>
<sequence length="310" mass="33851">MTNKLEQLKQYSDVVADTGDIEAIARYKPLDATTNPSLLYKAAQMEQYAPLVQDALSSTDSIEAACDKIAVAIGCEILKIVPGRVSTEVDARLSFNTNASIEKAKHLIGLYEEAGISKERVLIKLASTWEGIRAAEVLEKEGINCNLTLLFSFSQAAACADAGAFLISPFVGRILDWYKANTDQKEYAPMEDPGVVSVTRIYNYYKQHGYNTVVMGASFRNTGELEALAGCDRLTISPQLLGELEADTGELKRVLTPENSGEAIAKLIEDEAAFRFSNNEDAMATEKLSQGIRGFVADQVNLENFLKSKA</sequence>
<comment type="function">
    <text evidence="2">Transaldolase is important for the balance of metabolites in the pentose-phosphate pathway.</text>
</comment>
<comment type="catalytic activity">
    <reaction evidence="2">
        <text>D-sedoheptulose 7-phosphate + D-glyceraldehyde 3-phosphate = D-erythrose 4-phosphate + beta-D-fructose 6-phosphate</text>
        <dbReference type="Rhea" id="RHEA:17053"/>
        <dbReference type="ChEBI" id="CHEBI:16897"/>
        <dbReference type="ChEBI" id="CHEBI:57483"/>
        <dbReference type="ChEBI" id="CHEBI:57634"/>
        <dbReference type="ChEBI" id="CHEBI:59776"/>
        <dbReference type="EC" id="2.2.1.2"/>
    </reaction>
</comment>
<comment type="pathway">
    <text evidence="2">Carbohydrate degradation; pentose phosphate pathway; D-glyceraldehyde 3-phosphate and beta-D-fructose 6-phosphate from D-ribose 5-phosphate and D-xylulose 5-phosphate (non-oxidative stage): step 2/3.</text>
</comment>
<comment type="subunit">
    <text evidence="1">Homodimer.</text>
</comment>
<comment type="subcellular location">
    <subcellularLocation>
        <location evidence="2">Cytoplasm</location>
    </subcellularLocation>
</comment>
<comment type="similarity">
    <text evidence="2">Belongs to the transaldolase family. Type 1 subfamily.</text>
</comment>
<evidence type="ECO:0000250" key="1"/>
<evidence type="ECO:0000255" key="2">
    <source>
        <dbReference type="HAMAP-Rule" id="MF_00492"/>
    </source>
</evidence>
<organism>
    <name type="scientific">Teredinibacter turnerae (strain ATCC 39867 / T7901)</name>
    <dbReference type="NCBI Taxonomy" id="377629"/>
    <lineage>
        <taxon>Bacteria</taxon>
        <taxon>Pseudomonadati</taxon>
        <taxon>Pseudomonadota</taxon>
        <taxon>Gammaproteobacteria</taxon>
        <taxon>Cellvibrionales</taxon>
        <taxon>Cellvibrionaceae</taxon>
        <taxon>Teredinibacter</taxon>
    </lineage>
</organism>
<proteinExistence type="inferred from homology"/>